<feature type="chain" id="PRO_1000122423" description="Homoserine kinase">
    <location>
        <begin position="1"/>
        <end position="310"/>
    </location>
</feature>
<feature type="binding site" evidence="1">
    <location>
        <begin position="91"/>
        <end position="101"/>
    </location>
    <ligand>
        <name>ATP</name>
        <dbReference type="ChEBI" id="CHEBI:30616"/>
    </ligand>
</feature>
<gene>
    <name evidence="1" type="primary">thrB</name>
    <name type="ordered locus">EcSMS35_0002</name>
</gene>
<protein>
    <recommendedName>
        <fullName evidence="1">Homoserine kinase</fullName>
        <shortName evidence="1">HK</shortName>
        <shortName evidence="1">HSK</shortName>
        <ecNumber evidence="1">2.7.1.39</ecNumber>
    </recommendedName>
</protein>
<keyword id="KW-0028">Amino-acid biosynthesis</keyword>
<keyword id="KW-0067">ATP-binding</keyword>
<keyword id="KW-0963">Cytoplasm</keyword>
<keyword id="KW-0418">Kinase</keyword>
<keyword id="KW-0547">Nucleotide-binding</keyword>
<keyword id="KW-0791">Threonine biosynthesis</keyword>
<keyword id="KW-0808">Transferase</keyword>
<comment type="function">
    <text evidence="1">Catalyzes the ATP-dependent phosphorylation of L-homoserine to L-homoserine phosphate.</text>
</comment>
<comment type="catalytic activity">
    <reaction evidence="1">
        <text>L-homoserine + ATP = O-phospho-L-homoserine + ADP + H(+)</text>
        <dbReference type="Rhea" id="RHEA:13985"/>
        <dbReference type="ChEBI" id="CHEBI:15378"/>
        <dbReference type="ChEBI" id="CHEBI:30616"/>
        <dbReference type="ChEBI" id="CHEBI:57476"/>
        <dbReference type="ChEBI" id="CHEBI:57590"/>
        <dbReference type="ChEBI" id="CHEBI:456216"/>
        <dbReference type="EC" id="2.7.1.39"/>
    </reaction>
</comment>
<comment type="pathway">
    <text evidence="1">Amino-acid biosynthesis; L-threonine biosynthesis; L-threonine from L-aspartate: step 4/5.</text>
</comment>
<comment type="subcellular location">
    <subcellularLocation>
        <location evidence="1">Cytoplasm</location>
    </subcellularLocation>
</comment>
<comment type="similarity">
    <text evidence="1">Belongs to the GHMP kinase family. Homoserine kinase subfamily.</text>
</comment>
<reference key="1">
    <citation type="journal article" date="2008" name="J. Bacteriol.">
        <title>Insights into the environmental resistance gene pool from the genome sequence of the multidrug-resistant environmental isolate Escherichia coli SMS-3-5.</title>
        <authorList>
            <person name="Fricke W.F."/>
            <person name="Wright M.S."/>
            <person name="Lindell A.H."/>
            <person name="Harkins D.M."/>
            <person name="Baker-Austin C."/>
            <person name="Ravel J."/>
            <person name="Stepanauskas R."/>
        </authorList>
    </citation>
    <scope>NUCLEOTIDE SEQUENCE [LARGE SCALE GENOMIC DNA]</scope>
    <source>
        <strain>SMS-3-5 / SECEC</strain>
    </source>
</reference>
<accession>B1LFT4</accession>
<proteinExistence type="inferred from homology"/>
<dbReference type="EC" id="2.7.1.39" evidence="1"/>
<dbReference type="EMBL" id="CP000970">
    <property type="protein sequence ID" value="ACB17780.1"/>
    <property type="molecule type" value="Genomic_DNA"/>
</dbReference>
<dbReference type="RefSeq" id="WP_000241661.1">
    <property type="nucleotide sequence ID" value="NC_010498.1"/>
</dbReference>
<dbReference type="SMR" id="B1LFT4"/>
<dbReference type="KEGG" id="ecm:EcSMS35_0002"/>
<dbReference type="HOGENOM" id="CLU_041243_1_1_6"/>
<dbReference type="UniPathway" id="UPA00050">
    <property type="reaction ID" value="UER00064"/>
</dbReference>
<dbReference type="Proteomes" id="UP000007011">
    <property type="component" value="Chromosome"/>
</dbReference>
<dbReference type="GO" id="GO:0005737">
    <property type="term" value="C:cytoplasm"/>
    <property type="evidence" value="ECO:0007669"/>
    <property type="project" value="UniProtKB-SubCell"/>
</dbReference>
<dbReference type="GO" id="GO:0005524">
    <property type="term" value="F:ATP binding"/>
    <property type="evidence" value="ECO:0007669"/>
    <property type="project" value="UniProtKB-UniRule"/>
</dbReference>
<dbReference type="GO" id="GO:0004413">
    <property type="term" value="F:homoserine kinase activity"/>
    <property type="evidence" value="ECO:0007669"/>
    <property type="project" value="UniProtKB-UniRule"/>
</dbReference>
<dbReference type="GO" id="GO:0009088">
    <property type="term" value="P:threonine biosynthetic process"/>
    <property type="evidence" value="ECO:0007669"/>
    <property type="project" value="UniProtKB-UniRule"/>
</dbReference>
<dbReference type="FunFam" id="3.30.230.10:FF:000020">
    <property type="entry name" value="Homoserine kinase"/>
    <property type="match status" value="1"/>
</dbReference>
<dbReference type="FunFam" id="3.30.70.890:FF:000002">
    <property type="entry name" value="Homoserine kinase"/>
    <property type="match status" value="1"/>
</dbReference>
<dbReference type="Gene3D" id="3.30.230.10">
    <property type="match status" value="1"/>
</dbReference>
<dbReference type="Gene3D" id="3.30.70.890">
    <property type="entry name" value="GHMP kinase, C-terminal domain"/>
    <property type="match status" value="1"/>
</dbReference>
<dbReference type="HAMAP" id="MF_00384">
    <property type="entry name" value="Homoser_kinase"/>
    <property type="match status" value="1"/>
</dbReference>
<dbReference type="InterPro" id="IPR013750">
    <property type="entry name" value="GHMP_kinase_C_dom"/>
</dbReference>
<dbReference type="InterPro" id="IPR036554">
    <property type="entry name" value="GHMP_kinase_C_sf"/>
</dbReference>
<dbReference type="InterPro" id="IPR006204">
    <property type="entry name" value="GHMP_kinase_N_dom"/>
</dbReference>
<dbReference type="InterPro" id="IPR006203">
    <property type="entry name" value="GHMP_knse_ATP-bd_CS"/>
</dbReference>
<dbReference type="InterPro" id="IPR000870">
    <property type="entry name" value="Homoserine_kinase"/>
</dbReference>
<dbReference type="InterPro" id="IPR020568">
    <property type="entry name" value="Ribosomal_Su5_D2-typ_SF"/>
</dbReference>
<dbReference type="InterPro" id="IPR014721">
    <property type="entry name" value="Ribsml_uS5_D2-typ_fold_subgr"/>
</dbReference>
<dbReference type="NCBIfam" id="NF002288">
    <property type="entry name" value="PRK01212.1-4"/>
    <property type="match status" value="1"/>
</dbReference>
<dbReference type="NCBIfam" id="TIGR00191">
    <property type="entry name" value="thrB"/>
    <property type="match status" value="1"/>
</dbReference>
<dbReference type="PANTHER" id="PTHR20861:SF1">
    <property type="entry name" value="HOMOSERINE KINASE"/>
    <property type="match status" value="1"/>
</dbReference>
<dbReference type="PANTHER" id="PTHR20861">
    <property type="entry name" value="HOMOSERINE/4-DIPHOSPHOCYTIDYL-2-C-METHYL-D-ERYTHRITOL KINASE"/>
    <property type="match status" value="1"/>
</dbReference>
<dbReference type="Pfam" id="PF08544">
    <property type="entry name" value="GHMP_kinases_C"/>
    <property type="match status" value="1"/>
</dbReference>
<dbReference type="Pfam" id="PF00288">
    <property type="entry name" value="GHMP_kinases_N"/>
    <property type="match status" value="1"/>
</dbReference>
<dbReference type="PIRSF" id="PIRSF000676">
    <property type="entry name" value="Homoser_kin"/>
    <property type="match status" value="1"/>
</dbReference>
<dbReference type="PRINTS" id="PR00958">
    <property type="entry name" value="HOMSERKINASE"/>
</dbReference>
<dbReference type="SUPFAM" id="SSF55060">
    <property type="entry name" value="GHMP Kinase, C-terminal domain"/>
    <property type="match status" value="1"/>
</dbReference>
<dbReference type="SUPFAM" id="SSF54211">
    <property type="entry name" value="Ribosomal protein S5 domain 2-like"/>
    <property type="match status" value="1"/>
</dbReference>
<dbReference type="PROSITE" id="PS00627">
    <property type="entry name" value="GHMP_KINASES_ATP"/>
    <property type="match status" value="1"/>
</dbReference>
<organism>
    <name type="scientific">Escherichia coli (strain SMS-3-5 / SECEC)</name>
    <dbReference type="NCBI Taxonomy" id="439855"/>
    <lineage>
        <taxon>Bacteria</taxon>
        <taxon>Pseudomonadati</taxon>
        <taxon>Pseudomonadota</taxon>
        <taxon>Gammaproteobacteria</taxon>
        <taxon>Enterobacterales</taxon>
        <taxon>Enterobacteriaceae</taxon>
        <taxon>Escherichia</taxon>
    </lineage>
</organism>
<sequence length="310" mass="33596">MVKVYAPASSANMSVGFDVLGAAVTPVDGALLGDVVTVEAAETFSLNNLGRFADKLPSEPRENIVYQCWERFCQELGKQIPVAMTLEKNMPIGSGLGSSACSVVAALMAMNEHCGKPLNDTRLLALMGELEGRISGSIHYDNVAPCFLGGMQLMIEENDIISQQVPGFDEWLWVLAYPGIKVSTAEARAILPAQYRRQDCIAHGRHLAGFIHACYSRQPELAAKLMKDVIAEPYRERLLPGFRQARQAVAEIGAVASGISGSGPTLFALCDKPETAQRVADWLGKNYLQNQEGFVHICQLDTAGARVLEN</sequence>
<evidence type="ECO:0000255" key="1">
    <source>
        <dbReference type="HAMAP-Rule" id="MF_00384"/>
    </source>
</evidence>
<name>KHSE_ECOSM</name>